<gene>
    <name type="primary">sra</name>
    <name type="synonym">rpsV</name>
    <name type="ordered locus">SSON_1644</name>
</gene>
<accession>Q3Z1M3</accession>
<organism>
    <name type="scientific">Shigella sonnei (strain Ss046)</name>
    <dbReference type="NCBI Taxonomy" id="300269"/>
    <lineage>
        <taxon>Bacteria</taxon>
        <taxon>Pseudomonadati</taxon>
        <taxon>Pseudomonadota</taxon>
        <taxon>Gammaproteobacteria</taxon>
        <taxon>Enterobacterales</taxon>
        <taxon>Enterobacteriaceae</taxon>
        <taxon>Shigella</taxon>
    </lineage>
</organism>
<keyword id="KW-1185">Reference proteome</keyword>
<reference key="1">
    <citation type="journal article" date="2005" name="Nucleic Acids Res.">
        <title>Genome dynamics and diversity of Shigella species, the etiologic agents of bacillary dysentery.</title>
        <authorList>
            <person name="Yang F."/>
            <person name="Yang J."/>
            <person name="Zhang X."/>
            <person name="Chen L."/>
            <person name="Jiang Y."/>
            <person name="Yan Y."/>
            <person name="Tang X."/>
            <person name="Wang J."/>
            <person name="Xiong Z."/>
            <person name="Dong J."/>
            <person name="Xue Y."/>
            <person name="Zhu Y."/>
            <person name="Xu X."/>
            <person name="Sun L."/>
            <person name="Chen S."/>
            <person name="Nie H."/>
            <person name="Peng J."/>
            <person name="Xu J."/>
            <person name="Wang Y."/>
            <person name="Yuan Z."/>
            <person name="Wen Y."/>
            <person name="Yao Z."/>
            <person name="Shen Y."/>
            <person name="Qiang B."/>
            <person name="Hou Y."/>
            <person name="Yu J."/>
            <person name="Jin Q."/>
        </authorList>
    </citation>
    <scope>NUCLEOTIDE SEQUENCE [LARGE SCALE GENOMIC DNA]</scope>
    <source>
        <strain>Ss046</strain>
    </source>
</reference>
<proteinExistence type="inferred from homology"/>
<name>SRA_SHISS</name>
<feature type="chain" id="PRO_0000287579" description="Stationary-phase-induced ribosome-associated protein">
    <location>
        <begin position="1"/>
        <end position="45"/>
    </location>
</feature>
<feature type="region of interest" description="Disordered" evidence="2">
    <location>
        <begin position="21"/>
        <end position="45"/>
    </location>
</feature>
<protein>
    <recommendedName>
        <fullName>Stationary-phase-induced ribosome-associated protein</fullName>
        <shortName>SRA</shortName>
    </recommendedName>
    <alternativeName>
        <fullName>30S ribosomal protein S22</fullName>
    </alternativeName>
</protein>
<sequence length="45" mass="5096">MKSNRQARHILGLDHKISNQRKIVTEGDKSSVVNNPTGRKRPAEK</sequence>
<comment type="function">
    <text evidence="1">Although this protein associates with the 30S subunit of the ribosome it is not considered to be a bona fide ribosomal protein.</text>
</comment>
<comment type="subunit">
    <text evidence="1">Associates exclusively with the 30S subunit; there is 0.1 copy per ribosome in the exponential phase and 0.4 copies per ribosome in the stationary phase.</text>
</comment>
<comment type="similarity">
    <text evidence="3">Belongs to the SRA family.</text>
</comment>
<evidence type="ECO:0000250" key="1"/>
<evidence type="ECO:0000256" key="2">
    <source>
        <dbReference type="SAM" id="MobiDB-lite"/>
    </source>
</evidence>
<evidence type="ECO:0000305" key="3"/>
<dbReference type="EMBL" id="CP000038">
    <property type="protein sequence ID" value="AAZ88339.1"/>
    <property type="molecule type" value="Genomic_DNA"/>
</dbReference>
<dbReference type="RefSeq" id="WP_000841554.1">
    <property type="nucleotide sequence ID" value="NC_007384.1"/>
</dbReference>
<dbReference type="GeneID" id="93775639"/>
<dbReference type="KEGG" id="ssn:SSON_1644"/>
<dbReference type="HOGENOM" id="CLU_210948_0_0_6"/>
<dbReference type="Proteomes" id="UP000002529">
    <property type="component" value="Chromosome"/>
</dbReference>
<dbReference type="GO" id="GO:0006412">
    <property type="term" value="P:translation"/>
    <property type="evidence" value="ECO:0007669"/>
    <property type="project" value="InterPro"/>
</dbReference>
<dbReference type="InterPro" id="IPR012607">
    <property type="entry name" value="SRA-like"/>
</dbReference>
<dbReference type="NCBIfam" id="NF007473">
    <property type="entry name" value="PRK10057.1"/>
    <property type="match status" value="1"/>
</dbReference>
<dbReference type="Pfam" id="PF08136">
    <property type="entry name" value="SRA_like"/>
    <property type="match status" value="1"/>
</dbReference>